<accession>O88917</accession>
<accession>O09026</accession>
<accession>O35818</accession>
<accession>O88916</accession>
<feature type="signal peptide" evidence="11">
    <location>
        <begin position="1"/>
        <end position="24"/>
    </location>
</feature>
<feature type="chain" id="PRO_0000012908" description="Adhesion G protein-coupled receptor L1">
    <location>
        <begin position="25"/>
        <end position="1515"/>
    </location>
</feature>
<feature type="topological domain" description="Extracellular" evidence="2">
    <location>
        <begin position="25"/>
        <end position="857"/>
    </location>
</feature>
<feature type="transmembrane region" description="Helical; Name=1" evidence="2">
    <location>
        <begin position="858"/>
        <end position="878"/>
    </location>
</feature>
<feature type="topological domain" description="Cytoplasmic" evidence="2">
    <location>
        <begin position="879"/>
        <end position="892"/>
    </location>
</feature>
<feature type="transmembrane region" description="Helical; Name=2" evidence="2">
    <location>
        <begin position="893"/>
        <end position="913"/>
    </location>
</feature>
<feature type="topological domain" description="Extracellular" evidence="2">
    <location>
        <begin position="914"/>
        <end position="919"/>
    </location>
</feature>
<feature type="transmembrane region" description="Helical; Name=3" evidence="2">
    <location>
        <begin position="920"/>
        <end position="940"/>
    </location>
</feature>
<feature type="topological domain" description="Cytoplasmic" evidence="2">
    <location>
        <begin position="941"/>
        <end position="964"/>
    </location>
</feature>
<feature type="transmembrane region" description="Helical; Name=4" evidence="2">
    <location>
        <begin position="965"/>
        <end position="985"/>
    </location>
</feature>
<feature type="topological domain" description="Extracellular" evidence="2">
    <location>
        <begin position="986"/>
        <end position="1001"/>
    </location>
</feature>
<feature type="transmembrane region" description="Helical; Name=5" evidence="2">
    <location>
        <begin position="1002"/>
        <end position="1022"/>
    </location>
</feature>
<feature type="topological domain" description="Cytoplasmic" evidence="2">
    <location>
        <begin position="1023"/>
        <end position="1049"/>
    </location>
</feature>
<feature type="transmembrane region" description="Helical; Name=6" evidence="2">
    <location>
        <begin position="1050"/>
        <end position="1070"/>
    </location>
</feature>
<feature type="topological domain" description="Extracellular" evidence="2">
    <location>
        <begin position="1071"/>
        <end position="1074"/>
    </location>
</feature>
<feature type="transmembrane region" description="Helical; Name=7" evidence="2">
    <location>
        <begin position="1075"/>
        <end position="1095"/>
    </location>
</feature>
<feature type="topological domain" description="Cytoplasmic" evidence="2">
    <location>
        <begin position="1096"/>
        <end position="1515"/>
    </location>
</feature>
<feature type="domain" description="SUEL-type lectin" evidence="4">
    <location>
        <begin position="40"/>
        <end position="129"/>
    </location>
</feature>
<feature type="domain" description="Olfactomedin-like" evidence="5">
    <location>
        <begin position="139"/>
        <end position="398"/>
    </location>
</feature>
<feature type="domain" description="GAIN-B" evidence="3">
    <location>
        <begin position="669"/>
        <end position="850"/>
    </location>
</feature>
<feature type="region of interest" description="Disordered" evidence="6">
    <location>
        <begin position="400"/>
        <end position="468"/>
    </location>
</feature>
<feature type="region of interest" description="GPS" evidence="3">
    <location>
        <begin position="801"/>
        <end position="850"/>
    </location>
</feature>
<feature type="region of interest" description="Disordered" evidence="6">
    <location>
        <begin position="1144"/>
        <end position="1184"/>
    </location>
</feature>
<feature type="region of interest" description="Disordered" evidence="6">
    <location>
        <begin position="1291"/>
        <end position="1316"/>
    </location>
</feature>
<feature type="region of interest" description="Disordered" evidence="6">
    <location>
        <begin position="1337"/>
        <end position="1369"/>
    </location>
</feature>
<feature type="region of interest" description="Disordered" evidence="6">
    <location>
        <begin position="1401"/>
        <end position="1470"/>
    </location>
</feature>
<feature type="region of interest" description="Disordered" evidence="6">
    <location>
        <begin position="1492"/>
        <end position="1515"/>
    </location>
</feature>
<feature type="compositionally biased region" description="Low complexity" evidence="6">
    <location>
        <begin position="405"/>
        <end position="441"/>
    </location>
</feature>
<feature type="compositionally biased region" description="Pro residues" evidence="6">
    <location>
        <begin position="453"/>
        <end position="468"/>
    </location>
</feature>
<feature type="compositionally biased region" description="Pro residues" evidence="6">
    <location>
        <begin position="1345"/>
        <end position="1356"/>
    </location>
</feature>
<feature type="compositionally biased region" description="Pro residues" evidence="6">
    <location>
        <begin position="1449"/>
        <end position="1461"/>
    </location>
</feature>
<feature type="binding site" evidence="1">
    <location>
        <position position="42"/>
    </location>
    <ligand>
        <name>alpha-L-rhamnose</name>
        <dbReference type="ChEBI" id="CHEBI:27907"/>
    </ligand>
</feature>
<feature type="binding site" evidence="1">
    <location>
        <begin position="117"/>
        <end position="120"/>
    </location>
    <ligand>
        <name>alpha-L-rhamnose</name>
        <dbReference type="ChEBI" id="CHEBI:27907"/>
    </ligand>
</feature>
<feature type="site" description="Cleavage; by autolysis" evidence="3 8 10 11">
    <location>
        <begin position="837"/>
        <end position="838"/>
    </location>
</feature>
<feature type="modified residue" description="Omega-N-methylarginine" evidence="1">
    <location>
        <position position="1237"/>
    </location>
</feature>
<feature type="modified residue" description="Phosphoserine" evidence="1">
    <location>
        <position position="1263"/>
    </location>
</feature>
<feature type="modified residue" description="Phosphoserine" evidence="1">
    <location>
        <position position="1497"/>
    </location>
</feature>
<feature type="modified residue" description="Phosphoserine" evidence="1">
    <location>
        <position position="1514"/>
    </location>
</feature>
<feature type="glycosylation site" description="N-linked (GlcNAc...) asparagine" evidence="2">
    <location>
        <position position="98"/>
    </location>
</feature>
<feature type="glycosylation site" description="N-linked (GlcNAc...) asparagine" evidence="10">
    <location>
        <position position="531"/>
    </location>
</feature>
<feature type="glycosylation site" description="N-linked (GlcNAc...) asparagine" evidence="10">
    <location>
        <position position="640"/>
    </location>
</feature>
<feature type="glycosylation site" description="N-linked (GlcNAc...) asparagine" evidence="10">
    <location>
        <position position="741"/>
    </location>
</feature>
<feature type="glycosylation site" description="N-linked (GlcNAc...) asparagine" evidence="10">
    <location>
        <position position="800"/>
    </location>
</feature>
<feature type="glycosylation site" description="N-linked (GlcNAc...) asparagine" evidence="2">
    <location>
        <position position="805"/>
    </location>
</feature>
<feature type="glycosylation site" description="N-linked (GlcNAc...) asparagine" evidence="10">
    <location>
        <position position="826"/>
    </location>
</feature>
<feature type="disulfide bond" evidence="5">
    <location>
        <begin position="41"/>
        <end position="71"/>
    </location>
</feature>
<feature type="disulfide bond" evidence="5">
    <location>
        <begin position="50"/>
        <end position="128"/>
    </location>
</feature>
<feature type="disulfide bond" evidence="5">
    <location>
        <begin position="83"/>
        <end position="115"/>
    </location>
</feature>
<feature type="disulfide bond" evidence="5">
    <location>
        <begin position="96"/>
        <end position="102"/>
    </location>
</feature>
<feature type="disulfide bond" evidence="5">
    <location>
        <begin position="140"/>
        <end position="322"/>
    </location>
</feature>
<feature type="disulfide bond" evidence="5 10">
    <location>
        <begin position="480"/>
        <end position="515"/>
    </location>
</feature>
<feature type="disulfide bond" evidence="5 10">
    <location>
        <begin position="503"/>
        <end position="532"/>
    </location>
</feature>
<feature type="disulfide bond" evidence="3 10">
    <location>
        <begin position="801"/>
        <end position="832"/>
    </location>
</feature>
<feature type="disulfide bond" evidence="3 10">
    <location>
        <begin position="820"/>
        <end position="834"/>
    </location>
</feature>
<feature type="splice variant" id="VSP_050398" description="In isoform 2 and isoform 3." evidence="14 15">
    <original>KVEQKV</original>
    <variation>I</variation>
    <location>
        <begin position="132"/>
        <end position="137"/>
    </location>
</feature>
<feature type="splice variant" id="VSP_050399" description="In isoform 2 and isoform 4." evidence="13 14 15">
    <location>
        <begin position="1146"/>
        <end position="1189"/>
    </location>
</feature>
<feature type="mutagenesis site" description="Strongly reduced cleavage." evidence="10">
    <original>S</original>
    <variation>R</variation>
    <location>
        <position position="802"/>
    </location>
</feature>
<feature type="mutagenesis site" description="Abolishes cleavage." evidence="10">
    <original>W</original>
    <variation>I</variation>
    <location>
        <position position="804"/>
    </location>
</feature>
<feature type="mutagenesis site" description="Abolishes cleavage. Abolishes cell surface localization." evidence="8">
    <original>W</original>
    <variation>S</variation>
    <location>
        <position position="815"/>
    </location>
</feature>
<feature type="mutagenesis site" description="Strongly reduced cleavage." evidence="8 10">
    <original>C</original>
    <variation>S</variation>
    <location>
        <position position="834"/>
    </location>
</feature>
<feature type="mutagenesis site" description="Abolishes cleavage. Abolishes cell surface localization." evidence="8 10">
    <original>C</original>
    <variation>W</variation>
    <location>
        <position position="834"/>
    </location>
</feature>
<feature type="mutagenesis site" description="Abolishes cleavage. No effect on cell surface localization." evidence="10">
    <original>H</original>
    <variation>S</variation>
    <location>
        <position position="836"/>
    </location>
</feature>
<feature type="mutagenesis site" description="Abolishes cleavage. No effect on cell surface localization." evidence="10">
    <original>L</original>
    <variation>A</variation>
    <location>
        <position position="837"/>
    </location>
</feature>
<feature type="mutagenesis site" description="Abolishes cleavage. No effect on cell surface localization." evidence="8 10">
    <original>T</original>
    <variation>G</variation>
    <location>
        <position position="838"/>
    </location>
</feature>
<feature type="mutagenesis site" description="Abolishes cleavage. Abolishes cell surface localization." evidence="8 10">
    <original>T</original>
    <variation>P</variation>
    <location>
        <position position="838"/>
    </location>
</feature>
<feature type="mutagenesis site" description="Strongly reduced cleavage." evidence="10">
    <original>F</original>
    <variation>A</variation>
    <location>
        <position position="840"/>
    </location>
</feature>
<feature type="strand" evidence="18">
    <location>
        <begin position="483"/>
        <end position="485"/>
    </location>
</feature>
<feature type="strand" evidence="18">
    <location>
        <begin position="488"/>
        <end position="490"/>
    </location>
</feature>
<feature type="strand" evidence="18">
    <location>
        <begin position="498"/>
        <end position="502"/>
    </location>
</feature>
<feature type="strand" evidence="18">
    <location>
        <begin position="508"/>
        <end position="515"/>
    </location>
</feature>
<feature type="turn" evidence="18">
    <location>
        <begin position="517"/>
        <end position="519"/>
    </location>
</feature>
<feature type="helix" evidence="18">
    <location>
        <begin position="536"/>
        <end position="545"/>
    </location>
</feature>
<feature type="helix" evidence="18">
    <location>
        <begin position="550"/>
        <end position="560"/>
    </location>
</feature>
<feature type="helix" evidence="18">
    <location>
        <begin position="567"/>
        <end position="590"/>
    </location>
</feature>
<feature type="helix" evidence="18">
    <location>
        <begin position="605"/>
        <end position="627"/>
    </location>
</feature>
<feature type="helix" evidence="18">
    <location>
        <begin position="630"/>
        <end position="632"/>
    </location>
</feature>
<feature type="helix" evidence="18">
    <location>
        <begin position="633"/>
        <end position="636"/>
    </location>
</feature>
<feature type="helix" evidence="18">
    <location>
        <begin position="641"/>
        <end position="663"/>
    </location>
</feature>
<feature type="strand" evidence="18">
    <location>
        <begin position="668"/>
        <end position="675"/>
    </location>
</feature>
<feature type="strand" evidence="18">
    <location>
        <begin position="677"/>
        <end position="687"/>
    </location>
</feature>
<feature type="strand" evidence="18">
    <location>
        <begin position="695"/>
        <end position="697"/>
    </location>
</feature>
<feature type="strand" evidence="18">
    <location>
        <begin position="704"/>
        <end position="709"/>
    </location>
</feature>
<feature type="helix" evidence="18">
    <location>
        <begin position="711"/>
        <end position="716"/>
    </location>
</feature>
<feature type="strand" evidence="18">
    <location>
        <begin position="722"/>
        <end position="732"/>
    </location>
</feature>
<feature type="helix" evidence="18">
    <location>
        <begin position="733"/>
        <end position="736"/>
    </location>
</feature>
<feature type="strand" evidence="18">
    <location>
        <begin position="759"/>
        <end position="762"/>
    </location>
</feature>
<feature type="strand" evidence="18">
    <location>
        <begin position="766"/>
        <end position="773"/>
    </location>
</feature>
<feature type="strand" evidence="18">
    <location>
        <begin position="779"/>
        <end position="789"/>
    </location>
</feature>
<feature type="strand" evidence="18">
    <location>
        <begin position="796"/>
        <end position="806"/>
    </location>
</feature>
<feature type="turn" evidence="18">
    <location>
        <begin position="808"/>
        <end position="810"/>
    </location>
</feature>
<feature type="strand" evidence="18">
    <location>
        <begin position="813"/>
        <end position="816"/>
    </location>
</feature>
<feature type="strand" evidence="18">
    <location>
        <begin position="820"/>
        <end position="825"/>
    </location>
</feature>
<feature type="strand" evidence="18">
    <location>
        <begin position="827"/>
        <end position="836"/>
    </location>
</feature>
<feature type="strand" evidence="18">
    <location>
        <begin position="839"/>
        <end position="847"/>
    </location>
</feature>
<feature type="strand" evidence="19">
    <location>
        <begin position="1511"/>
        <end position="1514"/>
    </location>
</feature>
<comment type="function">
    <text evidence="11 12">Calcium-independent receptor of high affinity for alpha-latrotoxin, an excitatory neurotoxin present in black widow spider venom which triggers massive exocytosis from neurons and neuroendocrine cells. Receptor probably implicated in the regulation of exocytosis.</text>
</comment>
<comment type="function">
    <molecule>Isoform 2</molecule>
    <text>Receptor for TENM2 that mediates heterophilic synaptic cell-cell contact and postsynaptic specialization.</text>
</comment>
<comment type="subunit">
    <text evidence="1 7 9 11">Forms a heterodimer, consisting of a large extracellular region (p120) non-covalently linked to a seven-transmembrane moiety (p85). Interacts with syntaxin and with proteins of the SHANK family via the PDZ domain (PubMed:10958799, PubMed:9208860). Isoform 2 interacts with TENM2 (PubMed:21724987). Interacts (via extracellular domain) with FLRT1, FLRT2 and FLRT3 (via extracellular domain) (By similarity).</text>
</comment>
<comment type="subcellular location">
    <subcellularLocation>
        <location evidence="9 10">Cell membrane</location>
        <topology evidence="9 10">Multi-pass membrane protein</topology>
    </subcellularLocation>
</comment>
<comment type="subcellular location">
    <molecule>Isoform 2</molecule>
    <subcellularLocation>
        <location>Cell membrane</location>
    </subcellularLocation>
    <subcellularLocation>
        <location>Cell projection</location>
        <location>Axon</location>
    </subcellularLocation>
    <subcellularLocation>
        <location>Cell projection</location>
        <location>Growth cone</location>
    </subcellularLocation>
    <subcellularLocation>
        <location>Synapse</location>
    </subcellularLocation>
    <subcellularLocation>
        <location>Presynaptic cell membrane</location>
    </subcellularLocation>
    <subcellularLocation>
        <location>Synapse</location>
        <location>Synaptosome</location>
    </subcellularLocation>
    <text>Colocalizes with TENM2 on the cell surface, across intercellular junctions and on nerve terminals near synaptic clefts.</text>
</comment>
<comment type="alternative products">
    <event type="alternative splicing"/>
    <isoform>
        <id>O88917-1</id>
        <name>1</name>
        <name>CL1BB</name>
        <sequence type="displayed"/>
    </isoform>
    <isoform>
        <id>O88917-2</id>
        <name>2</name>
        <name>CL1AA</name>
        <sequence type="described" ref="VSP_050398 VSP_050399"/>
    </isoform>
    <isoform>
        <id>O88917-3</id>
        <name>3</name>
        <name>CL1AB</name>
        <sequence type="described" ref="VSP_050398"/>
    </isoform>
    <isoform>
        <id>O88917-4</id>
        <name>4</name>
        <name>CL1BA</name>
        <sequence type="described" ref="VSP_050399"/>
    </isoform>
</comment>
<comment type="tissue specificity">
    <text evidence="9 12">Expressed in the brain (at protein level). Brain specific distribution but low levels are also detected in most tissues.</text>
</comment>
<comment type="domain">
    <text>The extracellular domain coupled to the a single transmembrane region are sufficient for full responsiveness to alpha-latrotoxin.</text>
</comment>
<comment type="PTM">
    <text evidence="11">Autoproteolytically cleaved into 2 subunits, an extracellular subunit and a seven-transmembrane subunit. This proteolytic processing takes place early in the biosynthetic pathway, either in the endoplasmic reticulum or in the early compartment of the Golgi apparatus.</text>
</comment>
<comment type="similarity">
    <text evidence="16">Belongs to the G-protein coupled receptor 2 family. Adhesion G-protein coupled receptor (ADGR) subfamily.</text>
</comment>
<gene>
    <name evidence="17" type="primary">Adgrl1</name>
    <name evidence="15" type="synonym">Cirl</name>
    <name evidence="17" type="synonym">Cirl1</name>
    <name evidence="15" type="synonym">Cl1</name>
    <name evidence="17" type="synonym">Lphn1</name>
</gene>
<dbReference type="EMBL" id="AF081144">
    <property type="protein sequence ID" value="AAC62650.1"/>
    <property type="molecule type" value="mRNA"/>
</dbReference>
<dbReference type="EMBL" id="AF081145">
    <property type="protein sequence ID" value="AAC62651.1"/>
    <property type="molecule type" value="mRNA"/>
</dbReference>
<dbReference type="EMBL" id="AF081146">
    <property type="protein sequence ID" value="AAC62652.1"/>
    <property type="molecule type" value="mRNA"/>
</dbReference>
<dbReference type="EMBL" id="AF081147">
    <property type="protein sequence ID" value="AAC62653.1"/>
    <property type="molecule type" value="mRNA"/>
</dbReference>
<dbReference type="EMBL" id="U72487">
    <property type="protein sequence ID" value="AAC53268.1"/>
    <property type="molecule type" value="mRNA"/>
</dbReference>
<dbReference type="EMBL" id="U78105">
    <property type="protein sequence ID" value="AAC98700.1"/>
    <property type="molecule type" value="mRNA"/>
</dbReference>
<dbReference type="PIR" id="T17138">
    <property type="entry name" value="T17138"/>
</dbReference>
<dbReference type="PIR" id="T17145">
    <property type="entry name" value="T17145"/>
</dbReference>
<dbReference type="PIR" id="T17149">
    <property type="entry name" value="T17149"/>
</dbReference>
<dbReference type="PIR" id="T17156">
    <property type="entry name" value="T17156"/>
</dbReference>
<dbReference type="RefSeq" id="NP_001418295.1">
    <molecule id="O88917-2"/>
    <property type="nucleotide sequence ID" value="NM_001431366.1"/>
</dbReference>
<dbReference type="RefSeq" id="NP_075251.1">
    <molecule id="O88917-4"/>
    <property type="nucleotide sequence ID" value="NM_022962.2"/>
</dbReference>
<dbReference type="PDB" id="4DLQ">
    <property type="method" value="X-ray"/>
    <property type="resolution" value="1.85 A"/>
    <property type="chains" value="A=460-837, B=838-850"/>
</dbReference>
<dbReference type="PDB" id="5OVP">
    <property type="method" value="X-ray"/>
    <property type="resolution" value="1.50 A"/>
    <property type="chains" value="B=1510-1515"/>
</dbReference>
<dbReference type="PDBsum" id="4DLQ"/>
<dbReference type="PDBsum" id="5OVP"/>
<dbReference type="BMRB" id="O88917"/>
<dbReference type="SMR" id="O88917"/>
<dbReference type="BioGRID" id="249249">
    <property type="interactions" value="2"/>
</dbReference>
<dbReference type="FunCoup" id="O88917">
    <property type="interactions" value="1962"/>
</dbReference>
<dbReference type="IntAct" id="O88917">
    <property type="interactions" value="1"/>
</dbReference>
<dbReference type="MINT" id="O88917"/>
<dbReference type="STRING" id="10116.ENSRNOP00000045873"/>
<dbReference type="GuidetoPHARMACOLOGY" id="206"/>
<dbReference type="MEROPS" id="P02.010"/>
<dbReference type="GlyCosmos" id="O88917">
    <property type="glycosylation" value="7 sites, No reported glycans"/>
</dbReference>
<dbReference type="GlyGen" id="O88917">
    <property type="glycosylation" value="8 sites"/>
</dbReference>
<dbReference type="iPTMnet" id="O88917"/>
<dbReference type="PhosphoSitePlus" id="O88917"/>
<dbReference type="SwissPalm" id="O88917"/>
<dbReference type="PaxDb" id="10116-ENSRNOP00000042610"/>
<dbReference type="GeneID" id="65096"/>
<dbReference type="KEGG" id="rno:65096"/>
<dbReference type="AGR" id="RGD:620768"/>
<dbReference type="CTD" id="22859"/>
<dbReference type="RGD" id="620768">
    <property type="gene designation" value="Adgrl1"/>
</dbReference>
<dbReference type="VEuPathDB" id="HostDB:ENSRNOG00000029134"/>
<dbReference type="eggNOG" id="KOG3545">
    <property type="taxonomic scope" value="Eukaryota"/>
</dbReference>
<dbReference type="eggNOG" id="KOG4193">
    <property type="taxonomic scope" value="Eukaryota"/>
</dbReference>
<dbReference type="eggNOG" id="KOG4729">
    <property type="taxonomic scope" value="Eukaryota"/>
</dbReference>
<dbReference type="InParanoid" id="O88917"/>
<dbReference type="PhylomeDB" id="O88917"/>
<dbReference type="EvolutionaryTrace" id="O88917"/>
<dbReference type="PRO" id="PR:O88917"/>
<dbReference type="Proteomes" id="UP000002494">
    <property type="component" value="Chromosome 19"/>
</dbReference>
<dbReference type="Bgee" id="ENSRNOG00000029134">
    <property type="expression patterns" value="Expressed in frontal cortex and 19 other cell types or tissues"/>
</dbReference>
<dbReference type="ExpressionAtlas" id="O88917">
    <property type="expression patterns" value="baseline and differential"/>
</dbReference>
<dbReference type="GO" id="GO:0030424">
    <property type="term" value="C:axon"/>
    <property type="evidence" value="ECO:0000314"/>
    <property type="project" value="UniProtKB"/>
</dbReference>
<dbReference type="GO" id="GO:0098978">
    <property type="term" value="C:glutamatergic synapse"/>
    <property type="evidence" value="ECO:0000314"/>
    <property type="project" value="SynGO"/>
</dbReference>
<dbReference type="GO" id="GO:0030426">
    <property type="term" value="C:growth cone"/>
    <property type="evidence" value="ECO:0000314"/>
    <property type="project" value="UniProtKB"/>
</dbReference>
<dbReference type="GO" id="GO:0043005">
    <property type="term" value="C:neuron projection"/>
    <property type="evidence" value="ECO:0000314"/>
    <property type="project" value="UniProtKB"/>
</dbReference>
<dbReference type="GO" id="GO:0005886">
    <property type="term" value="C:plasma membrane"/>
    <property type="evidence" value="ECO:0000314"/>
    <property type="project" value="UniProtKB"/>
</dbReference>
<dbReference type="GO" id="GO:0042734">
    <property type="term" value="C:presynaptic membrane"/>
    <property type="evidence" value="ECO:0000314"/>
    <property type="project" value="UniProtKB"/>
</dbReference>
<dbReference type="GO" id="GO:0045202">
    <property type="term" value="C:synapse"/>
    <property type="evidence" value="ECO:0000314"/>
    <property type="project" value="UniProtKB"/>
</dbReference>
<dbReference type="GO" id="GO:0030246">
    <property type="term" value="F:carbohydrate binding"/>
    <property type="evidence" value="ECO:0007669"/>
    <property type="project" value="UniProtKB-KW"/>
</dbReference>
<dbReference type="GO" id="GO:0050839">
    <property type="term" value="F:cell adhesion molecule binding"/>
    <property type="evidence" value="ECO:0000314"/>
    <property type="project" value="UniProtKB"/>
</dbReference>
<dbReference type="GO" id="GO:0004930">
    <property type="term" value="F:G protein-coupled receptor activity"/>
    <property type="evidence" value="ECO:0000314"/>
    <property type="project" value="RGD"/>
</dbReference>
<dbReference type="GO" id="GO:0016524">
    <property type="term" value="F:latrotoxin receptor activity"/>
    <property type="evidence" value="ECO:0000314"/>
    <property type="project" value="UniProtKB"/>
</dbReference>
<dbReference type="GO" id="GO:0015643">
    <property type="term" value="F:toxic substance binding"/>
    <property type="evidence" value="ECO:0000353"/>
    <property type="project" value="RGD"/>
</dbReference>
<dbReference type="GO" id="GO:0007189">
    <property type="term" value="P:adenylate cyclase-activating G protein-coupled receptor signaling pathway"/>
    <property type="evidence" value="ECO:0000318"/>
    <property type="project" value="GO_Central"/>
</dbReference>
<dbReference type="GO" id="GO:0007166">
    <property type="term" value="P:cell surface receptor signaling pathway"/>
    <property type="evidence" value="ECO:0007669"/>
    <property type="project" value="InterPro"/>
</dbReference>
<dbReference type="GO" id="GO:0051965">
    <property type="term" value="P:positive regulation of synapse assembly"/>
    <property type="evidence" value="ECO:0000266"/>
    <property type="project" value="RGD"/>
</dbReference>
<dbReference type="CDD" id="cd16007">
    <property type="entry name" value="7tmB2_Latrophilin-1"/>
    <property type="match status" value="1"/>
</dbReference>
<dbReference type="CDD" id="cd22844">
    <property type="entry name" value="Gal_Rha_Lectin_LPHN1"/>
    <property type="match status" value="1"/>
</dbReference>
<dbReference type="FunFam" id="1.20.1070.10:FF:000011">
    <property type="entry name" value="Adhesion G protein-coupled receptor L2"/>
    <property type="match status" value="1"/>
</dbReference>
<dbReference type="FunFam" id="1.25.40.610:FF:000001">
    <property type="entry name" value="Adhesion G protein-coupled receptor L2"/>
    <property type="match status" value="1"/>
</dbReference>
<dbReference type="FunFam" id="2.60.120.740:FF:000001">
    <property type="entry name" value="Adhesion G protein-coupled receptor L2"/>
    <property type="match status" value="1"/>
</dbReference>
<dbReference type="FunFam" id="2.60.220.50:FF:000001">
    <property type="entry name" value="Adhesion G protein-coupled receptor L2"/>
    <property type="match status" value="1"/>
</dbReference>
<dbReference type="FunFam" id="4.10.1240.10:FF:000001">
    <property type="entry name" value="Adhesion G protein-coupled receptor L2"/>
    <property type="match status" value="1"/>
</dbReference>
<dbReference type="Gene3D" id="1.25.40.610">
    <property type="match status" value="1"/>
</dbReference>
<dbReference type="Gene3D" id="2.60.120.740">
    <property type="match status" value="1"/>
</dbReference>
<dbReference type="Gene3D" id="2.60.220.50">
    <property type="match status" value="1"/>
</dbReference>
<dbReference type="Gene3D" id="4.10.1240.10">
    <property type="entry name" value="GPCR, family 2, extracellular hormone receptor domain"/>
    <property type="match status" value="1"/>
</dbReference>
<dbReference type="Gene3D" id="1.20.1070.10">
    <property type="entry name" value="Rhodopsin 7-helix transmembrane proteins"/>
    <property type="match status" value="1"/>
</dbReference>
<dbReference type="InterPro" id="IPR057244">
    <property type="entry name" value="GAIN_B"/>
</dbReference>
<dbReference type="InterPro" id="IPR032471">
    <property type="entry name" value="GAIN_dom_N"/>
</dbReference>
<dbReference type="InterPro" id="IPR046338">
    <property type="entry name" value="GAIN_dom_sf"/>
</dbReference>
<dbReference type="InterPro" id="IPR017981">
    <property type="entry name" value="GPCR_2-like_7TM"/>
</dbReference>
<dbReference type="InterPro" id="IPR036445">
    <property type="entry name" value="GPCR_2_extracell_dom_sf"/>
</dbReference>
<dbReference type="InterPro" id="IPR001879">
    <property type="entry name" value="GPCR_2_extracellular_dom"/>
</dbReference>
<dbReference type="InterPro" id="IPR003924">
    <property type="entry name" value="GPCR_2_latrophilin"/>
</dbReference>
<dbReference type="InterPro" id="IPR003334">
    <property type="entry name" value="GPCR_2_latrophilin_rcpt_C"/>
</dbReference>
<dbReference type="InterPro" id="IPR000832">
    <property type="entry name" value="GPCR_2_secretin-like"/>
</dbReference>
<dbReference type="InterPro" id="IPR017983">
    <property type="entry name" value="GPCR_2_secretin-like_CS"/>
</dbReference>
<dbReference type="InterPro" id="IPR000203">
    <property type="entry name" value="GPS"/>
</dbReference>
<dbReference type="InterPro" id="IPR031234">
    <property type="entry name" value="Latrophilin-1_TM"/>
</dbReference>
<dbReference type="InterPro" id="IPR000922">
    <property type="entry name" value="Lectin_gal-bd_dom"/>
</dbReference>
<dbReference type="InterPro" id="IPR043159">
    <property type="entry name" value="Lectin_gal-bd_sf"/>
</dbReference>
<dbReference type="InterPro" id="IPR003112">
    <property type="entry name" value="Olfac-like_dom"/>
</dbReference>
<dbReference type="PANTHER" id="PTHR12011:SF62">
    <property type="entry name" value="ADHESION G PROTEIN-COUPLED RECEPTOR L1"/>
    <property type="match status" value="1"/>
</dbReference>
<dbReference type="PANTHER" id="PTHR12011">
    <property type="entry name" value="ADHESION G-PROTEIN COUPLED RECEPTOR"/>
    <property type="match status" value="1"/>
</dbReference>
<dbReference type="Pfam" id="PF00002">
    <property type="entry name" value="7tm_2"/>
    <property type="match status" value="1"/>
</dbReference>
<dbReference type="Pfam" id="PF16489">
    <property type="entry name" value="GAIN"/>
    <property type="match status" value="1"/>
</dbReference>
<dbReference type="Pfam" id="PF01825">
    <property type="entry name" value="GPS"/>
    <property type="match status" value="1"/>
</dbReference>
<dbReference type="Pfam" id="PF02793">
    <property type="entry name" value="HRM"/>
    <property type="match status" value="1"/>
</dbReference>
<dbReference type="Pfam" id="PF02354">
    <property type="entry name" value="Latrophilin"/>
    <property type="match status" value="1"/>
</dbReference>
<dbReference type="Pfam" id="PF02191">
    <property type="entry name" value="OLF"/>
    <property type="match status" value="1"/>
</dbReference>
<dbReference type="Pfam" id="PF02140">
    <property type="entry name" value="SUEL_Lectin"/>
    <property type="match status" value="1"/>
</dbReference>
<dbReference type="PRINTS" id="PR00249">
    <property type="entry name" value="GPCRSECRETIN"/>
</dbReference>
<dbReference type="PRINTS" id="PR01444">
    <property type="entry name" value="LATROPHILIN"/>
</dbReference>
<dbReference type="SMART" id="SM00303">
    <property type="entry name" value="GPS"/>
    <property type="match status" value="1"/>
</dbReference>
<dbReference type="SMART" id="SM00008">
    <property type="entry name" value="HormR"/>
    <property type="match status" value="1"/>
</dbReference>
<dbReference type="SMART" id="SM00284">
    <property type="entry name" value="OLF"/>
    <property type="match status" value="1"/>
</dbReference>
<dbReference type="SUPFAM" id="SSF81321">
    <property type="entry name" value="Family A G protein-coupled receptor-like"/>
    <property type="match status" value="1"/>
</dbReference>
<dbReference type="PROSITE" id="PS00650">
    <property type="entry name" value="G_PROTEIN_RECEP_F2_2"/>
    <property type="match status" value="1"/>
</dbReference>
<dbReference type="PROSITE" id="PS50227">
    <property type="entry name" value="G_PROTEIN_RECEP_F2_3"/>
    <property type="match status" value="1"/>
</dbReference>
<dbReference type="PROSITE" id="PS50261">
    <property type="entry name" value="G_PROTEIN_RECEP_F2_4"/>
    <property type="match status" value="1"/>
</dbReference>
<dbReference type="PROSITE" id="PS50221">
    <property type="entry name" value="GAIN_B"/>
    <property type="match status" value="1"/>
</dbReference>
<dbReference type="PROSITE" id="PS51132">
    <property type="entry name" value="OLF"/>
    <property type="match status" value="1"/>
</dbReference>
<dbReference type="PROSITE" id="PS50228">
    <property type="entry name" value="SUEL_LECTIN"/>
    <property type="match status" value="1"/>
</dbReference>
<evidence type="ECO:0000250" key="1">
    <source>
        <dbReference type="UniProtKB" id="Q80TR1"/>
    </source>
</evidence>
<evidence type="ECO:0000255" key="2"/>
<evidence type="ECO:0000255" key="3">
    <source>
        <dbReference type="PROSITE-ProRule" id="PRU00098"/>
    </source>
</evidence>
<evidence type="ECO:0000255" key="4">
    <source>
        <dbReference type="PROSITE-ProRule" id="PRU00260"/>
    </source>
</evidence>
<evidence type="ECO:0000255" key="5">
    <source>
        <dbReference type="PROSITE-ProRule" id="PRU00446"/>
    </source>
</evidence>
<evidence type="ECO:0000256" key="6">
    <source>
        <dbReference type="SAM" id="MobiDB-lite"/>
    </source>
</evidence>
<evidence type="ECO:0000269" key="7">
    <source>
    </source>
</evidence>
<evidence type="ECO:0000269" key="8">
    <source>
    </source>
</evidence>
<evidence type="ECO:0000269" key="9">
    <source>
    </source>
</evidence>
<evidence type="ECO:0000269" key="10">
    <source>
    </source>
</evidence>
<evidence type="ECO:0000269" key="11">
    <source>
    </source>
</evidence>
<evidence type="ECO:0000269" key="12">
    <source>
    </source>
</evidence>
<evidence type="ECO:0000303" key="13">
    <source>
    </source>
</evidence>
<evidence type="ECO:0000303" key="14">
    <source>
    </source>
</evidence>
<evidence type="ECO:0000303" key="15">
    <source>
    </source>
</evidence>
<evidence type="ECO:0000305" key="16"/>
<evidence type="ECO:0000312" key="17">
    <source>
        <dbReference type="RGD" id="620768"/>
    </source>
</evidence>
<evidence type="ECO:0007829" key="18">
    <source>
        <dbReference type="PDB" id="4DLQ"/>
    </source>
</evidence>
<evidence type="ECO:0007829" key="19">
    <source>
        <dbReference type="PDB" id="5OVP"/>
    </source>
</evidence>
<keyword id="KW-0002">3D-structure</keyword>
<keyword id="KW-0025">Alternative splicing</keyword>
<keyword id="KW-1003">Cell membrane</keyword>
<keyword id="KW-0966">Cell projection</keyword>
<keyword id="KW-0903">Direct protein sequencing</keyword>
<keyword id="KW-1015">Disulfide bond</keyword>
<keyword id="KW-0297">G-protein coupled receptor</keyword>
<keyword id="KW-0325">Glycoprotein</keyword>
<keyword id="KW-0430">Lectin</keyword>
<keyword id="KW-0472">Membrane</keyword>
<keyword id="KW-0488">Methylation</keyword>
<keyword id="KW-0597">Phosphoprotein</keyword>
<keyword id="KW-0675">Receptor</keyword>
<keyword id="KW-1185">Reference proteome</keyword>
<keyword id="KW-0732">Signal</keyword>
<keyword id="KW-0770">Synapse</keyword>
<keyword id="KW-0771">Synaptosome</keyword>
<keyword id="KW-0807">Transducer</keyword>
<keyword id="KW-0812">Transmembrane</keyword>
<keyword id="KW-1133">Transmembrane helix</keyword>
<reference key="1">
    <citation type="journal article" date="1998" name="J. Biol. Chem.">
        <title>Alpha-latrotoxin receptor CIRL/latrophilin 1 (CL1) defines an unusual family of ubiquitous G-protein-linked receptors. G-protein coupling not required for triggering exocytosis.</title>
        <authorList>
            <person name="Sugita S."/>
            <person name="Ichtchenko K."/>
            <person name="Khvotchev M."/>
            <person name="Suedhof T.C."/>
        </authorList>
    </citation>
    <scope>NUCLEOTIDE SEQUENCE [MRNA] (ISOFORMS 1; 2; 3 AND 4)</scope>
    <scope>TISSUE SPECIFICITY</scope>
    <scope>FUNCTION</scope>
</reference>
<reference key="2">
    <citation type="journal article" date="1997" name="Neuron">
        <title>Alpha-latrotoxin stimulates exocytosis by the interaction with a neuronal G-protein-coupled receptor.</title>
        <authorList>
            <person name="Krasnoperov V.G."/>
            <person name="Bittner M.A."/>
            <person name="Beavis R."/>
            <person name="Kuang Y."/>
            <person name="Salnikow K.V."/>
            <person name="Chepurny O.G."/>
            <person name="Little A.R."/>
            <person name="Plotnikov A.N."/>
            <person name="Wu D."/>
            <person name="Holz R.W."/>
            <person name="Petrenko A.G."/>
        </authorList>
    </citation>
    <scope>NUCLEOTIDE SEQUENCE [MRNA] (ISOFORM 4)</scope>
    <scope>PROTEIN SEQUENCE OF N-TERMINUS</scope>
    <scope>PROTEIN SEQUENCE OF 838-850</scope>
    <scope>PROTEOLYTIC PROCESSING</scope>
    <scope>INTERACTION WITH SYNTAXIN</scope>
    <scope>FUNCTION</scope>
</reference>
<reference key="3">
    <citation type="journal article" date="1997" name="J. Biol. Chem.">
        <title>Alpha-latrotoxin receptor, latrophilin, is a novel member of the secretin family of G protein-coupled receptors.</title>
        <authorList>
            <person name="Lelianova V.G."/>
            <person name="Davletov B.A."/>
            <person name="Sterling A."/>
            <person name="Rahman M.A."/>
            <person name="Grishin E.V."/>
            <person name="Totty N.F."/>
            <person name="Ushkaryov Y.A."/>
        </authorList>
    </citation>
    <scope>NUCLEOTIDE SEQUENCE [MRNA] (ISOFORM 2)</scope>
    <scope>PARTIAL PROTEIN SEQUENCE</scope>
</reference>
<reference key="4">
    <citation type="journal article" date="1996" name="J. Biol. Chem.">
        <title>Isolation and biochemical characterization of a Ca2+-independent alpha-latrotoxin-binding protein.</title>
        <authorList>
            <person name="Davletov B.A."/>
            <person name="Shamotienko O.G."/>
            <person name="Lelianova V.G."/>
            <person name="Grishin E.V."/>
            <person name="Ushkaryov Y.A."/>
        </authorList>
    </citation>
    <scope>CHARACTERIZATION (ISOFORM 2)</scope>
    <source>
        <strain>Sprague-Dawley</strain>
        <tissue>Brain</tissue>
    </source>
</reference>
<reference key="5">
    <citation type="journal article" date="1999" name="J. Biol. Chem.">
        <title>Structural requirements for alpha-latrotoxin binding and alpha-latrotoxin-stimulated secretion. A study with calcium-independent receptor of alpha-latrotoxin (CIRL) deletion mutants.</title>
        <authorList>
            <person name="Krasnoperov V."/>
            <person name="Bittner M.A."/>
            <person name="Holz R.W."/>
            <person name="Chepurny O."/>
            <person name="Petrenko A.G."/>
        </authorList>
    </citation>
    <scope>CHARACTERIZATION</scope>
</reference>
<reference key="6">
    <citation type="journal article" date="2000" name="J. Biol. Chem.">
        <title>The G protein-coupled receptor CL1 interacts directly with proteins of the Shank family.</title>
        <authorList>
            <person name="Tobaben S."/>
            <person name="Suedhof T.C."/>
            <person name="Stahl B."/>
        </authorList>
    </citation>
    <scope>INTERACTION WITH PROTEINS OF THE SHANK FAMILY</scope>
</reference>
<reference key="7">
    <citation type="journal article" date="2002" name="J. Biol. Chem.">
        <title>Post-translational proteolytic processing of the calcium-independent receptor of alpha-latrotoxin (CIRL), a natural chimera of the cell adhesion protein and the G protein-coupled receptor. Role of the G protein-coupled receptor proteolysis site (GPS) motif.</title>
        <authorList>
            <person name="Krasnoperov V."/>
            <person name="Lu Y."/>
            <person name="Buryanovsky L."/>
            <person name="Neubert T.A."/>
            <person name="Ichtchenko K."/>
            <person name="Petrenko A.G."/>
        </authorList>
    </citation>
    <scope>MUTAGENESIS OF TRP-815; CYS-834 AND THR-838</scope>
</reference>
<reference key="8">
    <citation type="journal article" date="2006" name="Proc. Natl. Acad. Sci. U.S.A.">
        <title>Quantitative phosphoproteomics of vasopressin-sensitive renal cells: regulation of aquaporin-2 phosphorylation at two sites.</title>
        <authorList>
            <person name="Hoffert J.D."/>
            <person name="Pisitkun T."/>
            <person name="Wang G."/>
            <person name="Shen R.-F."/>
            <person name="Knepper M.A."/>
        </authorList>
    </citation>
    <scope>IDENTIFICATION BY MASS SPECTROMETRY [LARGE SCALE ANALYSIS]</scope>
</reference>
<reference key="9">
    <citation type="journal article" date="2011" name="Proc. Natl. Acad. Sci. U.S.A.">
        <title>Latrophilin 1 and its endogenous ligand Lasso/teneurin-2 form a high-affinity transsynaptic receptor pair with signaling capabilities.</title>
        <authorList>
            <person name="Silva J.P."/>
            <person name="Lelianova V.G."/>
            <person name="Ermolyuk Y.S."/>
            <person name="Vysokov N."/>
            <person name="Hitchen P.G."/>
            <person name="Berninghausen O."/>
            <person name="Rahman M.A."/>
            <person name="Zangrandi A."/>
            <person name="Fidalgo S."/>
            <person name="Tonevitsky A.G."/>
            <person name="Dell A."/>
            <person name="Volynski K.E."/>
            <person name="Ushkaryov Y.A."/>
        </authorList>
    </citation>
    <scope>TENM2 LIGAND-BINDING</scope>
    <scope>INTERACTION WITH TENM2</scope>
    <scope>SUBCELLULAR LOCATION</scope>
    <scope>TISSUE SPECIFICITY</scope>
</reference>
<reference key="10">
    <citation type="journal article" date="2012" name="EMBO J.">
        <title>A novel evolutionarily conserved domain of cell-adhesion GPCRs mediates autoproteolysis.</title>
        <authorList>
            <person name="Arac D."/>
            <person name="Boucard A.A."/>
            <person name="Bolliger M.F."/>
            <person name="Nguyen J."/>
            <person name="Soltis S.M."/>
            <person name="Sudhof T.C."/>
            <person name="Brunger A.T."/>
        </authorList>
    </citation>
    <scope>X-RAY CRYSTALLOGRAPHY (1.85 ANGSTROMS) OF 460-850</scope>
    <scope>GLYCOSYLATION AT ASN-531; ASN-640; ASN-741; ASN-800 AND ASN-826</scope>
    <scope>DISULFIDE BONDS</scope>
    <scope>SUBCELLULAR LOCATION</scope>
    <scope>MUTAGENESIS OF SER-802; TRP-804; CYS-834; HIS-836; LEU-837; THR-838 AND PHE-840</scope>
    <scope>AUTOCATALYTIC PROCESSING</scope>
</reference>
<name>AGRL1_RAT</name>
<organism>
    <name type="scientific">Rattus norvegicus</name>
    <name type="common">Rat</name>
    <dbReference type="NCBI Taxonomy" id="10116"/>
    <lineage>
        <taxon>Eukaryota</taxon>
        <taxon>Metazoa</taxon>
        <taxon>Chordata</taxon>
        <taxon>Craniata</taxon>
        <taxon>Vertebrata</taxon>
        <taxon>Euteleostomi</taxon>
        <taxon>Mammalia</taxon>
        <taxon>Eutheria</taxon>
        <taxon>Euarchontoglires</taxon>
        <taxon>Glires</taxon>
        <taxon>Rodentia</taxon>
        <taxon>Myomorpha</taxon>
        <taxon>Muroidea</taxon>
        <taxon>Muridae</taxon>
        <taxon>Murinae</taxon>
        <taxon>Rattus</taxon>
    </lineage>
</organism>
<proteinExistence type="evidence at protein level"/>
<protein>
    <recommendedName>
        <fullName evidence="17">Adhesion G protein-coupled receptor L1</fullName>
    </recommendedName>
    <alternativeName>
        <fullName evidence="17">Calcium-independent alpha-latrotoxin receptor 1</fullName>
        <shortName evidence="15">CIRL-1</shortName>
    </alternativeName>
    <alternativeName>
        <fullName evidence="17">Latrophilin-1</fullName>
    </alternativeName>
</protein>
<sequence length="1515" mass="166615">MARLAAALWSLCVTTVLVTSATQGLSRAGLPFGLMRRELACEGYPIELRCPGSDVIMVENANYGRTDDKICDADPFQMENVQCYLPDAFKIMSQRCNNRTQCVVVAGSDAFPDPCPGTYKYLEVQYDCVPYKVEQKVFVCPGTLQKVLEPTSTHESEHQSGAWCKDPLQAGDRIYVMPWIPYRTDTLTEYASWEDYVAARHTTTYRLPNRVDGTGFVVYDGAVFYNKERTRNIVKYDLRTRIKSGETVINTANYHDTSPYRWGGKTDIDLAVDENGLWVIYATEGNNGRLVVSQLNPYTLRFEGTWETGYDKRSASNAFMVCGVLYVLRSVYVDDDSEAAGNRVDYAFNTNANREEPVSLAFPNPYQFVSSVDYNPRDNQLYVWNNYFVVRYSLEFGPPDPSAGPATSPPLSTTTTARPTPLTSTASPAATTPLRRAPLTTHPVGAINQLGPDLPPATAPAPSTRRPPAPNLHVSPELFCEPREVRRVQWPATQQGMLVERPCPKGTRGIASFQCLPALGLWNPRGPDLSNCTSPWVNQVAQKIKSGENAANIASELARHTRGSIYAGDVSSSVKLMEQLLDILDAQLQALRPIERESAGKNYNKMHKRERTCKDYIKAVVETVDNLLRPEALESWKDMNATEQVHTATMLLDVLEEGAFLLADNVREPARFLAAKQNVVLEVTVLSTEGQVQELVFPQEYASESSIQLSANTIKQNSRNGVVKVVFILYNNLGLFLSTENATVKLAGEAGTGGPGGASLVVNSQVIAASINKESSRVFLMDPVIFTVAHLEAKNHFNANCSFWNYSERSMLGYWSTQGCRLVESNKTHTTCACSHLTNFAVLMAHREIYQGRINELLLSVITWVGIVISLVCLAICISTFCFLRGLQTDRNTIHKNLCINLFLAELLFLVGIDKTQYEVACPIFAGLLHYFFLAAFSWLCLEGVHLYLLLVEVFESEYSRTKYYYLGGYCFPALVVGIAAAIDYRSYGTEKACWLRVDNYFIWSFIGPVSFVIVVNLVFLMVTLHKMIRSSSVLKPDSSRLDNIKSWALGAIALLFLLGLTWAFGLLFINKESVVMAYLFTTFNAFQGVFIFVFHCALQKKVHKEYSKCLRHSYCCIRSPPGGAHGSLKTSAMRSNTRYYTGTQVPGQGRHIHQVSLGPRGRSALPESQKDPGGQSGPGDPLTFGLCPSRIRRMWNDTVRKQTESSFMAGDINSTPTLNRGTMGNHLLTNPVLQPRGGTSPYNTLIAESVGFNPSSPPVFNSPGSYREPKHPLGGREACGMDTLPLNGNFNNSYSLRSGDFPPGDGGPEPPRGRNLADAAAFEKMIISELVHNNLRGASGGAKGPPPEPPVPPVPGVSEDEAGGPGGADRAEIELLYKALEEPLLLPRAQSVLYQSDLDESESCTAEDGATSRPLSSPPGRDSLYASGANLRDSPSYPDSSPEGPNEALPPPPPAPPGPPEIYYTSRPPALVARNPLQGYYQVRRPSHEGYLAAPSLEGPGPDGDGQMQLVTSL</sequence>